<protein>
    <recommendedName>
        <fullName evidence="2">ATP-dependent RNA helicase RhlB</fullName>
        <ecNumber evidence="2">3.6.4.13</ecNumber>
    </recommendedName>
</protein>
<sequence length="421" mass="47093">MSKTHLTEQKFSDFALHPQVVEALEKKGFYNCTPIQALALPLTLAGRDVAGQAQTGTGKTMAFLTSTFHYLLSHPAIDDRKVNQPRALIMAPTRELAVQIHADAEPLAQATGLKLGLAYGGDGYDKQLKVLESGVDILIGTTGRLIDYAKQNHINLGAIQVVVLDEADRMYDLGFIKDIRWLFRRMPPAAQRLNMLFSATLSYRVRELAFEQMNNAEYVEVEPEQKTGHRIKEELFYPSNEEKMRLLQTLIEEEWPDRAIIFANTKHRCEDIWGHLAADGHRVGLLTGDVAQKKRLRILDEFTRGDLDILVATDVAARGLHIPAVTHVFNYDLPDDCEDYVHRIGRTGRAGASGHSISLACEEYALNLPAIESYIGHSIPVSKYNPEALMNDLPKPLRLTRSRPGNGPRRAGAPRNRRRSG</sequence>
<reference key="1">
    <citation type="journal article" date="2001" name="Nature">
        <title>Complete genome sequence of a multiple drug resistant Salmonella enterica serovar Typhi CT18.</title>
        <authorList>
            <person name="Parkhill J."/>
            <person name="Dougan G."/>
            <person name="James K.D."/>
            <person name="Thomson N.R."/>
            <person name="Pickard D."/>
            <person name="Wain J."/>
            <person name="Churcher C.M."/>
            <person name="Mungall K.L."/>
            <person name="Bentley S.D."/>
            <person name="Holden M.T.G."/>
            <person name="Sebaihia M."/>
            <person name="Baker S."/>
            <person name="Basham D."/>
            <person name="Brooks K."/>
            <person name="Chillingworth T."/>
            <person name="Connerton P."/>
            <person name="Cronin A."/>
            <person name="Davis P."/>
            <person name="Davies R.M."/>
            <person name="Dowd L."/>
            <person name="White N."/>
            <person name="Farrar J."/>
            <person name="Feltwell T."/>
            <person name="Hamlin N."/>
            <person name="Haque A."/>
            <person name="Hien T.T."/>
            <person name="Holroyd S."/>
            <person name="Jagels K."/>
            <person name="Krogh A."/>
            <person name="Larsen T.S."/>
            <person name="Leather S."/>
            <person name="Moule S."/>
            <person name="O'Gaora P."/>
            <person name="Parry C."/>
            <person name="Quail M.A."/>
            <person name="Rutherford K.M."/>
            <person name="Simmonds M."/>
            <person name="Skelton J."/>
            <person name="Stevens K."/>
            <person name="Whitehead S."/>
            <person name="Barrell B.G."/>
        </authorList>
    </citation>
    <scope>NUCLEOTIDE SEQUENCE [LARGE SCALE GENOMIC DNA]</scope>
    <source>
        <strain>CT18</strain>
    </source>
</reference>
<reference key="2">
    <citation type="journal article" date="2003" name="J. Bacteriol.">
        <title>Comparative genomics of Salmonella enterica serovar Typhi strains Ty2 and CT18.</title>
        <authorList>
            <person name="Deng W."/>
            <person name="Liou S.-R."/>
            <person name="Plunkett G. III"/>
            <person name="Mayhew G.F."/>
            <person name="Rose D.J."/>
            <person name="Burland V."/>
            <person name="Kodoyianni V."/>
            <person name="Schwartz D.C."/>
            <person name="Blattner F.R."/>
        </authorList>
    </citation>
    <scope>NUCLEOTIDE SEQUENCE [LARGE SCALE GENOMIC DNA]</scope>
    <source>
        <strain>ATCC 700931 / Ty2</strain>
    </source>
</reference>
<accession>P0A2P1</accession>
<accession>P40863</accession>
<accession>Q9L6R8</accession>
<gene>
    <name evidence="2" type="primary">rhlB</name>
    <name type="ordered locus">STY3640</name>
    <name type="ordered locus">t3382</name>
</gene>
<dbReference type="EC" id="3.6.4.13" evidence="2"/>
<dbReference type="EMBL" id="AL513382">
    <property type="protein sequence ID" value="CAD09401.1"/>
    <property type="molecule type" value="Genomic_DNA"/>
</dbReference>
<dbReference type="EMBL" id="AE014613">
    <property type="protein sequence ID" value="AAO70906.1"/>
    <property type="molecule type" value="Genomic_DNA"/>
</dbReference>
<dbReference type="RefSeq" id="NP_457832.1">
    <property type="nucleotide sequence ID" value="NC_003198.1"/>
</dbReference>
<dbReference type="RefSeq" id="WP_000047525.1">
    <property type="nucleotide sequence ID" value="NZ_WSUR01000032.1"/>
</dbReference>
<dbReference type="SMR" id="P0A2P1"/>
<dbReference type="STRING" id="220341.gene:17587496"/>
<dbReference type="KEGG" id="stt:t3382"/>
<dbReference type="KEGG" id="sty:STY3640"/>
<dbReference type="PATRIC" id="fig|220341.7.peg.3709"/>
<dbReference type="eggNOG" id="COG0513">
    <property type="taxonomic scope" value="Bacteria"/>
</dbReference>
<dbReference type="HOGENOM" id="CLU_003041_1_3_6"/>
<dbReference type="OMA" id="TRFHDFK"/>
<dbReference type="OrthoDB" id="9805696at2"/>
<dbReference type="Proteomes" id="UP000000541">
    <property type="component" value="Chromosome"/>
</dbReference>
<dbReference type="Proteomes" id="UP000002670">
    <property type="component" value="Chromosome"/>
</dbReference>
<dbReference type="GO" id="GO:0005829">
    <property type="term" value="C:cytosol"/>
    <property type="evidence" value="ECO:0007669"/>
    <property type="project" value="TreeGrafter"/>
</dbReference>
<dbReference type="GO" id="GO:0005524">
    <property type="term" value="F:ATP binding"/>
    <property type="evidence" value="ECO:0007669"/>
    <property type="project" value="UniProtKB-UniRule"/>
</dbReference>
<dbReference type="GO" id="GO:0016887">
    <property type="term" value="F:ATP hydrolysis activity"/>
    <property type="evidence" value="ECO:0007669"/>
    <property type="project" value="RHEA"/>
</dbReference>
<dbReference type="GO" id="GO:0003723">
    <property type="term" value="F:RNA binding"/>
    <property type="evidence" value="ECO:0007669"/>
    <property type="project" value="UniProtKB-UniRule"/>
</dbReference>
<dbReference type="GO" id="GO:0003724">
    <property type="term" value="F:RNA helicase activity"/>
    <property type="evidence" value="ECO:0007669"/>
    <property type="project" value="UniProtKB-UniRule"/>
</dbReference>
<dbReference type="GO" id="GO:0006401">
    <property type="term" value="P:RNA catabolic process"/>
    <property type="evidence" value="ECO:0007669"/>
    <property type="project" value="UniProtKB-UniRule"/>
</dbReference>
<dbReference type="CDD" id="cd00268">
    <property type="entry name" value="DEADc"/>
    <property type="match status" value="1"/>
</dbReference>
<dbReference type="CDD" id="cd18787">
    <property type="entry name" value="SF2_C_DEAD"/>
    <property type="match status" value="1"/>
</dbReference>
<dbReference type="FunFam" id="3.40.50.300:FF:000008">
    <property type="entry name" value="ATP-dependent RNA helicase RhlB"/>
    <property type="match status" value="1"/>
</dbReference>
<dbReference type="FunFam" id="3.40.50.300:FF:000312">
    <property type="entry name" value="ATP-dependent RNA helicase RhlB"/>
    <property type="match status" value="1"/>
</dbReference>
<dbReference type="Gene3D" id="3.40.50.300">
    <property type="entry name" value="P-loop containing nucleotide triphosphate hydrolases"/>
    <property type="match status" value="2"/>
</dbReference>
<dbReference type="HAMAP" id="MF_00661">
    <property type="entry name" value="DEAD_helicase_RhlB"/>
    <property type="match status" value="1"/>
</dbReference>
<dbReference type="InterPro" id="IPR011545">
    <property type="entry name" value="DEAD/DEAH_box_helicase_dom"/>
</dbReference>
<dbReference type="InterPro" id="IPR050079">
    <property type="entry name" value="DEAD_box_RNA_helicase"/>
</dbReference>
<dbReference type="InterPro" id="IPR014001">
    <property type="entry name" value="Helicase_ATP-bd"/>
</dbReference>
<dbReference type="InterPro" id="IPR001650">
    <property type="entry name" value="Helicase_C-like"/>
</dbReference>
<dbReference type="InterPro" id="IPR027417">
    <property type="entry name" value="P-loop_NTPase"/>
</dbReference>
<dbReference type="InterPro" id="IPR000629">
    <property type="entry name" value="RNA-helicase_DEAD-box_CS"/>
</dbReference>
<dbReference type="InterPro" id="IPR023554">
    <property type="entry name" value="RNA_helicase_ATP-dep_RhlB"/>
</dbReference>
<dbReference type="InterPro" id="IPR014014">
    <property type="entry name" value="RNA_helicase_DEAD_Q_motif"/>
</dbReference>
<dbReference type="NCBIfam" id="NF003419">
    <property type="entry name" value="PRK04837.1"/>
    <property type="match status" value="1"/>
</dbReference>
<dbReference type="PANTHER" id="PTHR47959:SF10">
    <property type="entry name" value="ATP-DEPENDENT RNA HELICASE RHLB"/>
    <property type="match status" value="1"/>
</dbReference>
<dbReference type="PANTHER" id="PTHR47959">
    <property type="entry name" value="ATP-DEPENDENT RNA HELICASE RHLE-RELATED"/>
    <property type="match status" value="1"/>
</dbReference>
<dbReference type="Pfam" id="PF00270">
    <property type="entry name" value="DEAD"/>
    <property type="match status" value="1"/>
</dbReference>
<dbReference type="Pfam" id="PF00271">
    <property type="entry name" value="Helicase_C"/>
    <property type="match status" value="1"/>
</dbReference>
<dbReference type="SMART" id="SM00487">
    <property type="entry name" value="DEXDc"/>
    <property type="match status" value="1"/>
</dbReference>
<dbReference type="SMART" id="SM00490">
    <property type="entry name" value="HELICc"/>
    <property type="match status" value="1"/>
</dbReference>
<dbReference type="SUPFAM" id="SSF52540">
    <property type="entry name" value="P-loop containing nucleoside triphosphate hydrolases"/>
    <property type="match status" value="1"/>
</dbReference>
<dbReference type="PROSITE" id="PS00039">
    <property type="entry name" value="DEAD_ATP_HELICASE"/>
    <property type="match status" value="1"/>
</dbReference>
<dbReference type="PROSITE" id="PS51192">
    <property type="entry name" value="HELICASE_ATP_BIND_1"/>
    <property type="match status" value="1"/>
</dbReference>
<dbReference type="PROSITE" id="PS51194">
    <property type="entry name" value="HELICASE_CTER"/>
    <property type="match status" value="1"/>
</dbReference>
<dbReference type="PROSITE" id="PS51195">
    <property type="entry name" value="Q_MOTIF"/>
    <property type="match status" value="1"/>
</dbReference>
<organism>
    <name type="scientific">Salmonella typhi</name>
    <dbReference type="NCBI Taxonomy" id="90370"/>
    <lineage>
        <taxon>Bacteria</taxon>
        <taxon>Pseudomonadati</taxon>
        <taxon>Pseudomonadota</taxon>
        <taxon>Gammaproteobacteria</taxon>
        <taxon>Enterobacterales</taxon>
        <taxon>Enterobacteriaceae</taxon>
        <taxon>Salmonella</taxon>
    </lineage>
</organism>
<keyword id="KW-0067">ATP-binding</keyword>
<keyword id="KW-0963">Cytoplasm</keyword>
<keyword id="KW-0347">Helicase</keyword>
<keyword id="KW-0378">Hydrolase</keyword>
<keyword id="KW-0547">Nucleotide-binding</keyword>
<keyword id="KW-0694">RNA-binding</keyword>
<name>RHLB_SALTI</name>
<proteinExistence type="inferred from homology"/>
<comment type="function">
    <text evidence="2">DEAD-box RNA helicase involved in RNA degradation. Has RNA-dependent ATPase activity and unwinds double-stranded RNA.</text>
</comment>
<comment type="catalytic activity">
    <reaction evidence="2">
        <text>ATP + H2O = ADP + phosphate + H(+)</text>
        <dbReference type="Rhea" id="RHEA:13065"/>
        <dbReference type="ChEBI" id="CHEBI:15377"/>
        <dbReference type="ChEBI" id="CHEBI:15378"/>
        <dbReference type="ChEBI" id="CHEBI:30616"/>
        <dbReference type="ChEBI" id="CHEBI:43474"/>
        <dbReference type="ChEBI" id="CHEBI:456216"/>
        <dbReference type="EC" id="3.6.4.13"/>
    </reaction>
</comment>
<comment type="subunit">
    <text evidence="2">Component of the RNA degradosome, which is a multiprotein complex involved in RNA processing and mRNA degradation.</text>
</comment>
<comment type="subcellular location">
    <subcellularLocation>
        <location evidence="2">Cytoplasm</location>
    </subcellularLocation>
</comment>
<comment type="similarity">
    <text evidence="2">Belongs to the DEAD box helicase family. RhlB subfamily.</text>
</comment>
<feature type="initiator methionine" description="Removed" evidence="1">
    <location>
        <position position="1"/>
    </location>
</feature>
<feature type="chain" id="PRO_0000200782" description="ATP-dependent RNA helicase RhlB">
    <location>
        <begin position="2"/>
        <end position="421"/>
    </location>
</feature>
<feature type="domain" description="Helicase ATP-binding" evidence="2">
    <location>
        <begin position="40"/>
        <end position="219"/>
    </location>
</feature>
<feature type="domain" description="Helicase C-terminal" evidence="2">
    <location>
        <begin position="245"/>
        <end position="390"/>
    </location>
</feature>
<feature type="region of interest" description="Disordered" evidence="3">
    <location>
        <begin position="396"/>
        <end position="421"/>
    </location>
</feature>
<feature type="short sequence motif" description="Q motif">
    <location>
        <begin position="9"/>
        <end position="37"/>
    </location>
</feature>
<feature type="short sequence motif" description="DEAD box">
    <location>
        <begin position="165"/>
        <end position="168"/>
    </location>
</feature>
<feature type="compositionally biased region" description="Low complexity" evidence="3">
    <location>
        <begin position="402"/>
        <end position="414"/>
    </location>
</feature>
<feature type="binding site" evidence="2">
    <location>
        <begin position="53"/>
        <end position="60"/>
    </location>
    <ligand>
        <name>ATP</name>
        <dbReference type="ChEBI" id="CHEBI:30616"/>
    </ligand>
</feature>
<evidence type="ECO:0000250" key="1"/>
<evidence type="ECO:0000255" key="2">
    <source>
        <dbReference type="HAMAP-Rule" id="MF_00661"/>
    </source>
</evidence>
<evidence type="ECO:0000256" key="3">
    <source>
        <dbReference type="SAM" id="MobiDB-lite"/>
    </source>
</evidence>